<name>Y2530_EDWI9</name>
<dbReference type="EMBL" id="CP001600">
    <property type="protein sequence ID" value="ACR69700.1"/>
    <property type="molecule type" value="Genomic_DNA"/>
</dbReference>
<dbReference type="RefSeq" id="WP_015871811.1">
    <property type="nucleotide sequence ID" value="NZ_CP169062.1"/>
</dbReference>
<dbReference type="SMR" id="C5BED9"/>
<dbReference type="STRING" id="67780.B6E78_04775"/>
<dbReference type="KEGG" id="eic:NT01EI_2530"/>
<dbReference type="PATRIC" id="fig|634503.3.peg.2252"/>
<dbReference type="HOGENOM" id="CLU_035023_2_2_6"/>
<dbReference type="OrthoDB" id="5166626at2"/>
<dbReference type="Proteomes" id="UP000001485">
    <property type="component" value="Chromosome"/>
</dbReference>
<dbReference type="GO" id="GO:0005886">
    <property type="term" value="C:plasma membrane"/>
    <property type="evidence" value="ECO:0007669"/>
    <property type="project" value="UniProtKB-SubCell"/>
</dbReference>
<dbReference type="GO" id="GO:0008324">
    <property type="term" value="F:monoatomic cation transmembrane transporter activity"/>
    <property type="evidence" value="ECO:0007669"/>
    <property type="project" value="InterPro"/>
</dbReference>
<dbReference type="GO" id="GO:0006813">
    <property type="term" value="P:potassium ion transport"/>
    <property type="evidence" value="ECO:0007669"/>
    <property type="project" value="InterPro"/>
</dbReference>
<dbReference type="FunFam" id="3.30.70.1450:FF:000003">
    <property type="entry name" value="Putative transport protein YbjL"/>
    <property type="match status" value="1"/>
</dbReference>
<dbReference type="Gene3D" id="3.30.70.1450">
    <property type="entry name" value="Regulator of K+ conductance, C-terminal domain"/>
    <property type="match status" value="1"/>
</dbReference>
<dbReference type="HAMAP" id="MF_01015">
    <property type="entry name" value="YbjL"/>
    <property type="match status" value="1"/>
</dbReference>
<dbReference type="InterPro" id="IPR050144">
    <property type="entry name" value="AAE_transporter"/>
</dbReference>
<dbReference type="InterPro" id="IPR006037">
    <property type="entry name" value="RCK_C"/>
</dbReference>
<dbReference type="InterPro" id="IPR036721">
    <property type="entry name" value="RCK_C_sf"/>
</dbReference>
<dbReference type="InterPro" id="IPR023017">
    <property type="entry name" value="Transp_YbjL_put"/>
</dbReference>
<dbReference type="InterPro" id="IPR006512">
    <property type="entry name" value="YidE_YbjL"/>
</dbReference>
<dbReference type="NCBIfam" id="NF003440">
    <property type="entry name" value="PRK04972.1"/>
    <property type="match status" value="1"/>
</dbReference>
<dbReference type="NCBIfam" id="TIGR01625">
    <property type="entry name" value="YidE_YbjL_dupl"/>
    <property type="match status" value="2"/>
</dbReference>
<dbReference type="PANTHER" id="PTHR30445">
    <property type="entry name" value="K(+)_H(+) ANTIPORTER SUBUNIT KHTT"/>
    <property type="match status" value="1"/>
</dbReference>
<dbReference type="PANTHER" id="PTHR30445:SF10">
    <property type="entry name" value="TRANSPORT PROTEIN YBJL-RELATED"/>
    <property type="match status" value="1"/>
</dbReference>
<dbReference type="Pfam" id="PF06826">
    <property type="entry name" value="Asp-Al_Ex"/>
    <property type="match status" value="2"/>
</dbReference>
<dbReference type="Pfam" id="PF02080">
    <property type="entry name" value="TrkA_C"/>
    <property type="match status" value="2"/>
</dbReference>
<dbReference type="SUPFAM" id="SSF116726">
    <property type="entry name" value="TrkA C-terminal domain-like"/>
    <property type="match status" value="2"/>
</dbReference>
<dbReference type="PROSITE" id="PS51202">
    <property type="entry name" value="RCK_C"/>
    <property type="match status" value="2"/>
</dbReference>
<organism>
    <name type="scientific">Edwardsiella ictaluri (strain 93-146)</name>
    <dbReference type="NCBI Taxonomy" id="634503"/>
    <lineage>
        <taxon>Bacteria</taxon>
        <taxon>Pseudomonadati</taxon>
        <taxon>Pseudomonadota</taxon>
        <taxon>Gammaproteobacteria</taxon>
        <taxon>Enterobacterales</taxon>
        <taxon>Hafniaceae</taxon>
        <taxon>Edwardsiella</taxon>
    </lineage>
</organism>
<proteinExistence type="inferred from homology"/>
<sequence length="562" mass="60493">MNIDVANLLTGNYILLLFVVLALGLCLGKLRLGSIQLGNSIGVLVVSLLLGQQHFSMNTDALNLGFMLFIFCVGVEAGPNFFSIFFRDGKNYLMLALVMVASALCIALGLGKLFRWDIGLTAGMLAGSMTSTPVLVGAGDTLRQTMADNPQLGQLQDHLSLGYALTYLVGLVSLIFGARYLPKLQHQDLPTSAQQIARERGLDNDTQRKVFLPVIRAYRVGPELVAWADGKNLRELGIYSQTGCYIERIRRNGILATPDGDAVLQVGDEIALVGYPDAHARLDPSFRNGKEVFDRDLLDMRIVTEEIVVKNSNAVSKRLSQVKLTDHGCFLNRVIRSQIEMPIDDNIVLNKGDVLQVSGDARRVKSVADRIGFISIHSQVTDLLAFCAFFIIGLMIGLITFQFTGFSFGIGNAAGLLFAGIMLGFLRANHPTFGYIPQGALNMVKEFGLMVFMAGVGLSAGAGMRHGLGEVGGQMLIAGLIVSLVPVVICFLFGAFVLRMNRALLFGAIMGARTCAPAMDIINDASRSNIPALGYAGTYAIANVLLTLAGTLIIIVWPGVVG</sequence>
<feature type="chain" id="PRO_1000213239" description="Putative transport protein NT01EI_2530">
    <location>
        <begin position="1"/>
        <end position="562"/>
    </location>
</feature>
<feature type="transmembrane region" description="Helical" evidence="1">
    <location>
        <begin position="8"/>
        <end position="28"/>
    </location>
</feature>
<feature type="transmembrane region" description="Helical" evidence="1">
    <location>
        <begin position="32"/>
        <end position="52"/>
    </location>
</feature>
<feature type="transmembrane region" description="Helical" evidence="1">
    <location>
        <begin position="66"/>
        <end position="86"/>
    </location>
</feature>
<feature type="transmembrane region" description="Helical" evidence="1">
    <location>
        <begin position="94"/>
        <end position="114"/>
    </location>
</feature>
<feature type="transmembrane region" description="Helical" evidence="1">
    <location>
        <begin position="118"/>
        <end position="138"/>
    </location>
</feature>
<feature type="transmembrane region" description="Helical" evidence="1">
    <location>
        <begin position="158"/>
        <end position="178"/>
    </location>
</feature>
<feature type="transmembrane region" description="Helical" evidence="1">
    <location>
        <begin position="383"/>
        <end position="403"/>
    </location>
</feature>
<feature type="transmembrane region" description="Helical" evidence="1">
    <location>
        <begin position="406"/>
        <end position="426"/>
    </location>
</feature>
<feature type="transmembrane region" description="Helical" evidence="1">
    <location>
        <begin position="443"/>
        <end position="463"/>
    </location>
</feature>
<feature type="transmembrane region" description="Helical" evidence="1">
    <location>
        <begin position="477"/>
        <end position="497"/>
    </location>
</feature>
<feature type="transmembrane region" description="Helical" evidence="1">
    <location>
        <begin position="541"/>
        <end position="561"/>
    </location>
</feature>
<feature type="domain" description="RCK C-terminal 1" evidence="1">
    <location>
        <begin position="202"/>
        <end position="288"/>
    </location>
</feature>
<feature type="domain" description="RCK C-terminal 2" evidence="1">
    <location>
        <begin position="290"/>
        <end position="373"/>
    </location>
</feature>
<keyword id="KW-1003">Cell membrane</keyword>
<keyword id="KW-0472">Membrane</keyword>
<keyword id="KW-0677">Repeat</keyword>
<keyword id="KW-0812">Transmembrane</keyword>
<keyword id="KW-1133">Transmembrane helix</keyword>
<keyword id="KW-0813">Transport</keyword>
<reference key="1">
    <citation type="submission" date="2009-03" db="EMBL/GenBank/DDBJ databases">
        <title>Complete genome sequence of Edwardsiella ictaluri 93-146.</title>
        <authorList>
            <person name="Williams M.L."/>
            <person name="Gillaspy A.F."/>
            <person name="Dyer D.W."/>
            <person name="Thune R.L."/>
            <person name="Waldbieser G.C."/>
            <person name="Schuster S.C."/>
            <person name="Gipson J."/>
            <person name="Zaitshik J."/>
            <person name="Landry C."/>
            <person name="Lawrence M.L."/>
        </authorList>
    </citation>
    <scope>NUCLEOTIDE SEQUENCE [LARGE SCALE GENOMIC DNA]</scope>
    <source>
        <strain>93-146</strain>
    </source>
</reference>
<accession>C5BED9</accession>
<comment type="subcellular location">
    <subcellularLocation>
        <location evidence="1">Cell membrane</location>
        <topology evidence="1">Multi-pass membrane protein</topology>
    </subcellularLocation>
</comment>
<comment type="similarity">
    <text evidence="1">Belongs to the AAE transporter (TC 2.A.81) family. YbjL subfamily.</text>
</comment>
<evidence type="ECO:0000255" key="1">
    <source>
        <dbReference type="HAMAP-Rule" id="MF_01015"/>
    </source>
</evidence>
<gene>
    <name type="ordered locus">NT01EI_2530</name>
</gene>
<protein>
    <recommendedName>
        <fullName evidence="1">Putative transport protein NT01EI_2530</fullName>
    </recommendedName>
</protein>